<accession>C6DYE1</accession>
<name>DTD_GEOSM</name>
<reference key="1">
    <citation type="submission" date="2009-07" db="EMBL/GenBank/DDBJ databases">
        <title>Complete sequence of Geobacter sp. M21.</title>
        <authorList>
            <consortium name="US DOE Joint Genome Institute"/>
            <person name="Lucas S."/>
            <person name="Copeland A."/>
            <person name="Lapidus A."/>
            <person name="Glavina del Rio T."/>
            <person name="Dalin E."/>
            <person name="Tice H."/>
            <person name="Bruce D."/>
            <person name="Goodwin L."/>
            <person name="Pitluck S."/>
            <person name="Saunders E."/>
            <person name="Brettin T."/>
            <person name="Detter J.C."/>
            <person name="Han C."/>
            <person name="Larimer F."/>
            <person name="Land M."/>
            <person name="Hauser L."/>
            <person name="Kyrpides N."/>
            <person name="Ovchinnikova G."/>
            <person name="Lovley D."/>
        </authorList>
    </citation>
    <scope>NUCLEOTIDE SEQUENCE [LARGE SCALE GENOMIC DNA]</scope>
    <source>
        <strain>M21</strain>
    </source>
</reference>
<gene>
    <name evidence="1" type="primary">dtd</name>
    <name type="ordered locus">GM21_0335</name>
</gene>
<sequence>MKAVIQRVKEAKVSVEGRVVGEIGQGVLVLLGVEIGDACPQADWMAEKIVNLRIFADSEGKMNLALPEVKGEMLAVSQFTLAGNCSKGRRPSFDTAAAPEEANRLYSYFMGQVWERGVPVQSGIFQADMEVSLVNDGPVTFILETPPKR</sequence>
<dbReference type="EC" id="3.1.1.96" evidence="1"/>
<dbReference type="EMBL" id="CP001661">
    <property type="protein sequence ID" value="ACT16416.1"/>
    <property type="molecule type" value="Genomic_DNA"/>
</dbReference>
<dbReference type="SMR" id="C6DYE1"/>
<dbReference type="STRING" id="443144.GM21_0335"/>
<dbReference type="KEGG" id="gem:GM21_0335"/>
<dbReference type="eggNOG" id="COG1490">
    <property type="taxonomic scope" value="Bacteria"/>
</dbReference>
<dbReference type="HOGENOM" id="CLU_076901_1_0_7"/>
<dbReference type="OrthoDB" id="9801395at2"/>
<dbReference type="GO" id="GO:0005737">
    <property type="term" value="C:cytoplasm"/>
    <property type="evidence" value="ECO:0007669"/>
    <property type="project" value="UniProtKB-SubCell"/>
</dbReference>
<dbReference type="GO" id="GO:0051500">
    <property type="term" value="F:D-tyrosyl-tRNA(Tyr) deacylase activity"/>
    <property type="evidence" value="ECO:0007669"/>
    <property type="project" value="TreeGrafter"/>
</dbReference>
<dbReference type="GO" id="GO:0106026">
    <property type="term" value="F:Gly-tRNA(Ala) deacylase activity"/>
    <property type="evidence" value="ECO:0007669"/>
    <property type="project" value="UniProtKB-UniRule"/>
</dbReference>
<dbReference type="GO" id="GO:0043908">
    <property type="term" value="F:Ser(Gly)-tRNA(Ala) hydrolase activity"/>
    <property type="evidence" value="ECO:0007669"/>
    <property type="project" value="UniProtKB-UniRule"/>
</dbReference>
<dbReference type="GO" id="GO:0000049">
    <property type="term" value="F:tRNA binding"/>
    <property type="evidence" value="ECO:0007669"/>
    <property type="project" value="UniProtKB-UniRule"/>
</dbReference>
<dbReference type="GO" id="GO:0019478">
    <property type="term" value="P:D-amino acid catabolic process"/>
    <property type="evidence" value="ECO:0007669"/>
    <property type="project" value="UniProtKB-UniRule"/>
</dbReference>
<dbReference type="CDD" id="cd00563">
    <property type="entry name" value="Dtyr_deacylase"/>
    <property type="match status" value="1"/>
</dbReference>
<dbReference type="FunFam" id="3.50.80.10:FF:000001">
    <property type="entry name" value="D-aminoacyl-tRNA deacylase"/>
    <property type="match status" value="1"/>
</dbReference>
<dbReference type="Gene3D" id="3.50.80.10">
    <property type="entry name" value="D-tyrosyl-tRNA(Tyr) deacylase"/>
    <property type="match status" value="1"/>
</dbReference>
<dbReference type="HAMAP" id="MF_00518">
    <property type="entry name" value="Deacylase_Dtd"/>
    <property type="match status" value="1"/>
</dbReference>
<dbReference type="InterPro" id="IPR003732">
    <property type="entry name" value="Daa-tRNA_deacyls_DTD"/>
</dbReference>
<dbReference type="InterPro" id="IPR023509">
    <property type="entry name" value="DTD-like_sf"/>
</dbReference>
<dbReference type="NCBIfam" id="TIGR00256">
    <property type="entry name" value="D-aminoacyl-tRNA deacylase"/>
    <property type="match status" value="1"/>
</dbReference>
<dbReference type="PANTHER" id="PTHR10472:SF5">
    <property type="entry name" value="D-AMINOACYL-TRNA DEACYLASE 1"/>
    <property type="match status" value="1"/>
</dbReference>
<dbReference type="PANTHER" id="PTHR10472">
    <property type="entry name" value="D-TYROSYL-TRNA TYR DEACYLASE"/>
    <property type="match status" value="1"/>
</dbReference>
<dbReference type="Pfam" id="PF02580">
    <property type="entry name" value="Tyr_Deacylase"/>
    <property type="match status" value="1"/>
</dbReference>
<dbReference type="SUPFAM" id="SSF69500">
    <property type="entry name" value="DTD-like"/>
    <property type="match status" value="1"/>
</dbReference>
<comment type="function">
    <text evidence="1">An aminoacyl-tRNA editing enzyme that deacylates mischarged D-aminoacyl-tRNAs. Also deacylates mischarged glycyl-tRNA(Ala), protecting cells against glycine mischarging by AlaRS. Acts via tRNA-based rather than protein-based catalysis; rejects L-amino acids rather than detecting D-amino acids in the active site. By recycling D-aminoacyl-tRNA to D-amino acids and free tRNA molecules, this enzyme counteracts the toxicity associated with the formation of D-aminoacyl-tRNA entities in vivo and helps enforce protein L-homochirality.</text>
</comment>
<comment type="catalytic activity">
    <reaction evidence="1">
        <text>glycyl-tRNA(Ala) + H2O = tRNA(Ala) + glycine + H(+)</text>
        <dbReference type="Rhea" id="RHEA:53744"/>
        <dbReference type="Rhea" id="RHEA-COMP:9657"/>
        <dbReference type="Rhea" id="RHEA-COMP:13640"/>
        <dbReference type="ChEBI" id="CHEBI:15377"/>
        <dbReference type="ChEBI" id="CHEBI:15378"/>
        <dbReference type="ChEBI" id="CHEBI:57305"/>
        <dbReference type="ChEBI" id="CHEBI:78442"/>
        <dbReference type="ChEBI" id="CHEBI:78522"/>
        <dbReference type="EC" id="3.1.1.96"/>
    </reaction>
</comment>
<comment type="catalytic activity">
    <reaction evidence="1">
        <text>a D-aminoacyl-tRNA + H2O = a tRNA + a D-alpha-amino acid + H(+)</text>
        <dbReference type="Rhea" id="RHEA:13953"/>
        <dbReference type="Rhea" id="RHEA-COMP:10123"/>
        <dbReference type="Rhea" id="RHEA-COMP:10124"/>
        <dbReference type="ChEBI" id="CHEBI:15377"/>
        <dbReference type="ChEBI" id="CHEBI:15378"/>
        <dbReference type="ChEBI" id="CHEBI:59871"/>
        <dbReference type="ChEBI" id="CHEBI:78442"/>
        <dbReference type="ChEBI" id="CHEBI:79333"/>
        <dbReference type="EC" id="3.1.1.96"/>
    </reaction>
</comment>
<comment type="subunit">
    <text evidence="1">Homodimer.</text>
</comment>
<comment type="subcellular location">
    <subcellularLocation>
        <location evidence="1">Cytoplasm</location>
    </subcellularLocation>
</comment>
<comment type="domain">
    <text evidence="1">A Gly-cisPro motif from one monomer fits into the active site of the other monomer to allow specific chiral rejection of L-amino acids.</text>
</comment>
<comment type="similarity">
    <text evidence="1">Belongs to the DTD family.</text>
</comment>
<evidence type="ECO:0000255" key="1">
    <source>
        <dbReference type="HAMAP-Rule" id="MF_00518"/>
    </source>
</evidence>
<proteinExistence type="inferred from homology"/>
<protein>
    <recommendedName>
        <fullName evidence="1">D-aminoacyl-tRNA deacylase</fullName>
        <shortName evidence="1">DTD</shortName>
        <ecNumber evidence="1">3.1.1.96</ecNumber>
    </recommendedName>
    <alternativeName>
        <fullName evidence="1">Gly-tRNA(Ala) deacylase</fullName>
    </alternativeName>
</protein>
<organism>
    <name type="scientific">Geobacter sp. (strain M21)</name>
    <dbReference type="NCBI Taxonomy" id="443144"/>
    <lineage>
        <taxon>Bacteria</taxon>
        <taxon>Pseudomonadati</taxon>
        <taxon>Thermodesulfobacteriota</taxon>
        <taxon>Desulfuromonadia</taxon>
        <taxon>Geobacterales</taxon>
        <taxon>Geobacteraceae</taxon>
        <taxon>Geobacter</taxon>
    </lineage>
</organism>
<feature type="chain" id="PRO_1000211730" description="D-aminoacyl-tRNA deacylase">
    <location>
        <begin position="1"/>
        <end position="149"/>
    </location>
</feature>
<feature type="short sequence motif" description="Gly-cisPro motif, important for rejection of L-amino acids" evidence="1">
    <location>
        <begin position="137"/>
        <end position="138"/>
    </location>
</feature>
<keyword id="KW-0963">Cytoplasm</keyword>
<keyword id="KW-0378">Hydrolase</keyword>
<keyword id="KW-0694">RNA-binding</keyword>
<keyword id="KW-0820">tRNA-binding</keyword>